<protein>
    <recommendedName>
        <fullName evidence="1">Lipoyl synthase</fullName>
        <ecNumber evidence="1">2.8.1.8</ecNumber>
    </recommendedName>
    <alternativeName>
        <fullName evidence="1">Lip-syn</fullName>
        <shortName evidence="1">LS</shortName>
    </alternativeName>
    <alternativeName>
        <fullName evidence="1">Lipoate synthase</fullName>
    </alternativeName>
    <alternativeName>
        <fullName evidence="1">Lipoic acid synthase</fullName>
    </alternativeName>
    <alternativeName>
        <fullName evidence="1">Sulfur insertion protein LipA</fullName>
    </alternativeName>
</protein>
<comment type="function">
    <text evidence="1">Catalyzes the radical-mediated insertion of two sulfur atoms into the C-6 and C-8 positions of the octanoyl moiety bound to the lipoyl domains of lipoate-dependent enzymes, thereby converting the octanoylated domains into lipoylated derivatives.</text>
</comment>
<comment type="catalytic activity">
    <reaction evidence="1">
        <text>[[Fe-S] cluster scaffold protein carrying a second [4Fe-4S](2+) cluster] + N(6)-octanoyl-L-lysyl-[protein] + 2 oxidized [2Fe-2S]-[ferredoxin] + 2 S-adenosyl-L-methionine + 4 H(+) = [[Fe-S] cluster scaffold protein] + N(6)-[(R)-dihydrolipoyl]-L-lysyl-[protein] + 4 Fe(3+) + 2 hydrogen sulfide + 2 5'-deoxyadenosine + 2 L-methionine + 2 reduced [2Fe-2S]-[ferredoxin]</text>
        <dbReference type="Rhea" id="RHEA:16585"/>
        <dbReference type="Rhea" id="RHEA-COMP:9928"/>
        <dbReference type="Rhea" id="RHEA-COMP:10000"/>
        <dbReference type="Rhea" id="RHEA-COMP:10001"/>
        <dbReference type="Rhea" id="RHEA-COMP:10475"/>
        <dbReference type="Rhea" id="RHEA-COMP:14568"/>
        <dbReference type="Rhea" id="RHEA-COMP:14569"/>
        <dbReference type="ChEBI" id="CHEBI:15378"/>
        <dbReference type="ChEBI" id="CHEBI:17319"/>
        <dbReference type="ChEBI" id="CHEBI:29034"/>
        <dbReference type="ChEBI" id="CHEBI:29919"/>
        <dbReference type="ChEBI" id="CHEBI:33722"/>
        <dbReference type="ChEBI" id="CHEBI:33737"/>
        <dbReference type="ChEBI" id="CHEBI:33738"/>
        <dbReference type="ChEBI" id="CHEBI:57844"/>
        <dbReference type="ChEBI" id="CHEBI:59789"/>
        <dbReference type="ChEBI" id="CHEBI:78809"/>
        <dbReference type="ChEBI" id="CHEBI:83100"/>
        <dbReference type="EC" id="2.8.1.8"/>
    </reaction>
</comment>
<comment type="cofactor">
    <cofactor evidence="1">
        <name>[4Fe-4S] cluster</name>
        <dbReference type="ChEBI" id="CHEBI:49883"/>
    </cofactor>
    <text evidence="1">Binds 2 [4Fe-4S] clusters per subunit. One cluster is coordinated with 3 cysteines and an exchangeable S-adenosyl-L-methionine.</text>
</comment>
<comment type="pathway">
    <text evidence="1">Protein modification; protein lipoylation via endogenous pathway; protein N(6)-(lipoyl)lysine from octanoyl-[acyl-carrier-protein]: step 2/2.</text>
</comment>
<comment type="subcellular location">
    <subcellularLocation>
        <location evidence="1">Cytoplasm</location>
    </subcellularLocation>
</comment>
<comment type="similarity">
    <text evidence="1">Belongs to the radical SAM superfamily. Lipoyl synthase family.</text>
</comment>
<keyword id="KW-0004">4Fe-4S</keyword>
<keyword id="KW-0963">Cytoplasm</keyword>
<keyword id="KW-0408">Iron</keyword>
<keyword id="KW-0411">Iron-sulfur</keyword>
<keyword id="KW-0479">Metal-binding</keyword>
<keyword id="KW-1185">Reference proteome</keyword>
<keyword id="KW-0949">S-adenosyl-L-methionine</keyword>
<keyword id="KW-0808">Transferase</keyword>
<evidence type="ECO:0000255" key="1">
    <source>
        <dbReference type="HAMAP-Rule" id="MF_00206"/>
    </source>
</evidence>
<evidence type="ECO:0000255" key="2">
    <source>
        <dbReference type="PROSITE-ProRule" id="PRU01266"/>
    </source>
</evidence>
<evidence type="ECO:0000256" key="3">
    <source>
        <dbReference type="SAM" id="MobiDB-lite"/>
    </source>
</evidence>
<name>LIPA_MARMM</name>
<accession>Q0APQ9</accession>
<organism>
    <name type="scientific">Maricaulis maris (strain MCS10)</name>
    <name type="common">Caulobacter maris</name>
    <dbReference type="NCBI Taxonomy" id="394221"/>
    <lineage>
        <taxon>Bacteria</taxon>
        <taxon>Pseudomonadati</taxon>
        <taxon>Pseudomonadota</taxon>
        <taxon>Alphaproteobacteria</taxon>
        <taxon>Maricaulales</taxon>
        <taxon>Maricaulaceae</taxon>
        <taxon>Maricaulis</taxon>
    </lineage>
</organism>
<reference key="1">
    <citation type="submission" date="2006-08" db="EMBL/GenBank/DDBJ databases">
        <title>Complete sequence of Maricaulis maris MCS10.</title>
        <authorList>
            <consortium name="US DOE Joint Genome Institute"/>
            <person name="Copeland A."/>
            <person name="Lucas S."/>
            <person name="Lapidus A."/>
            <person name="Barry K."/>
            <person name="Detter J.C."/>
            <person name="Glavina del Rio T."/>
            <person name="Hammon N."/>
            <person name="Israni S."/>
            <person name="Dalin E."/>
            <person name="Tice H."/>
            <person name="Pitluck S."/>
            <person name="Saunders E."/>
            <person name="Brettin T."/>
            <person name="Bruce D."/>
            <person name="Han C."/>
            <person name="Tapia R."/>
            <person name="Gilna P."/>
            <person name="Schmutz J."/>
            <person name="Larimer F."/>
            <person name="Land M."/>
            <person name="Hauser L."/>
            <person name="Kyrpides N."/>
            <person name="Mikhailova N."/>
            <person name="Viollier P."/>
            <person name="Stephens C."/>
            <person name="Richardson P."/>
        </authorList>
    </citation>
    <scope>NUCLEOTIDE SEQUENCE [LARGE SCALE GENOMIC DNA]</scope>
    <source>
        <strain>MCS10</strain>
    </source>
</reference>
<dbReference type="EC" id="2.8.1.8" evidence="1"/>
<dbReference type="EMBL" id="CP000449">
    <property type="protein sequence ID" value="ABI65728.1"/>
    <property type="molecule type" value="Genomic_DNA"/>
</dbReference>
<dbReference type="RefSeq" id="WP_011643375.1">
    <property type="nucleotide sequence ID" value="NC_008347.1"/>
</dbReference>
<dbReference type="SMR" id="Q0APQ9"/>
<dbReference type="STRING" id="394221.Mmar10_1436"/>
<dbReference type="KEGG" id="mmr:Mmar10_1436"/>
<dbReference type="eggNOG" id="COG0320">
    <property type="taxonomic scope" value="Bacteria"/>
</dbReference>
<dbReference type="HOGENOM" id="CLU_033144_2_1_5"/>
<dbReference type="OrthoDB" id="9787898at2"/>
<dbReference type="UniPathway" id="UPA00538">
    <property type="reaction ID" value="UER00593"/>
</dbReference>
<dbReference type="Proteomes" id="UP000001964">
    <property type="component" value="Chromosome"/>
</dbReference>
<dbReference type="GO" id="GO:0005737">
    <property type="term" value="C:cytoplasm"/>
    <property type="evidence" value="ECO:0007669"/>
    <property type="project" value="UniProtKB-SubCell"/>
</dbReference>
<dbReference type="GO" id="GO:0051539">
    <property type="term" value="F:4 iron, 4 sulfur cluster binding"/>
    <property type="evidence" value="ECO:0007669"/>
    <property type="project" value="UniProtKB-UniRule"/>
</dbReference>
<dbReference type="GO" id="GO:0016992">
    <property type="term" value="F:lipoate synthase activity"/>
    <property type="evidence" value="ECO:0007669"/>
    <property type="project" value="UniProtKB-UniRule"/>
</dbReference>
<dbReference type="GO" id="GO:0046872">
    <property type="term" value="F:metal ion binding"/>
    <property type="evidence" value="ECO:0007669"/>
    <property type="project" value="UniProtKB-KW"/>
</dbReference>
<dbReference type="CDD" id="cd01335">
    <property type="entry name" value="Radical_SAM"/>
    <property type="match status" value="1"/>
</dbReference>
<dbReference type="FunFam" id="3.20.20.70:FF:000040">
    <property type="entry name" value="Lipoyl synthase"/>
    <property type="match status" value="1"/>
</dbReference>
<dbReference type="Gene3D" id="3.20.20.70">
    <property type="entry name" value="Aldolase class I"/>
    <property type="match status" value="1"/>
</dbReference>
<dbReference type="HAMAP" id="MF_00206">
    <property type="entry name" value="Lipoyl_synth"/>
    <property type="match status" value="1"/>
</dbReference>
<dbReference type="InterPro" id="IPR013785">
    <property type="entry name" value="Aldolase_TIM"/>
</dbReference>
<dbReference type="InterPro" id="IPR006638">
    <property type="entry name" value="Elp3/MiaA/NifB-like_rSAM"/>
</dbReference>
<dbReference type="InterPro" id="IPR031691">
    <property type="entry name" value="LIAS_N"/>
</dbReference>
<dbReference type="InterPro" id="IPR003698">
    <property type="entry name" value="Lipoyl_synth"/>
</dbReference>
<dbReference type="InterPro" id="IPR007197">
    <property type="entry name" value="rSAM"/>
</dbReference>
<dbReference type="NCBIfam" id="TIGR00510">
    <property type="entry name" value="lipA"/>
    <property type="match status" value="1"/>
</dbReference>
<dbReference type="NCBIfam" id="NF004019">
    <property type="entry name" value="PRK05481.1"/>
    <property type="match status" value="1"/>
</dbReference>
<dbReference type="NCBIfam" id="NF009544">
    <property type="entry name" value="PRK12928.1"/>
    <property type="match status" value="1"/>
</dbReference>
<dbReference type="PANTHER" id="PTHR10949">
    <property type="entry name" value="LIPOYL SYNTHASE"/>
    <property type="match status" value="1"/>
</dbReference>
<dbReference type="PANTHER" id="PTHR10949:SF0">
    <property type="entry name" value="LIPOYL SYNTHASE, MITOCHONDRIAL"/>
    <property type="match status" value="1"/>
</dbReference>
<dbReference type="Pfam" id="PF16881">
    <property type="entry name" value="LIAS_N"/>
    <property type="match status" value="1"/>
</dbReference>
<dbReference type="Pfam" id="PF04055">
    <property type="entry name" value="Radical_SAM"/>
    <property type="match status" value="1"/>
</dbReference>
<dbReference type="PIRSF" id="PIRSF005963">
    <property type="entry name" value="Lipoyl_synth"/>
    <property type="match status" value="1"/>
</dbReference>
<dbReference type="SFLD" id="SFLDF00271">
    <property type="entry name" value="lipoyl_synthase"/>
    <property type="match status" value="1"/>
</dbReference>
<dbReference type="SFLD" id="SFLDG01058">
    <property type="entry name" value="lipoyl_synthase_like"/>
    <property type="match status" value="1"/>
</dbReference>
<dbReference type="SMART" id="SM00729">
    <property type="entry name" value="Elp3"/>
    <property type="match status" value="1"/>
</dbReference>
<dbReference type="SUPFAM" id="SSF102114">
    <property type="entry name" value="Radical SAM enzymes"/>
    <property type="match status" value="1"/>
</dbReference>
<dbReference type="PROSITE" id="PS51918">
    <property type="entry name" value="RADICAL_SAM"/>
    <property type="match status" value="1"/>
</dbReference>
<feature type="chain" id="PRO_0000325274" description="Lipoyl synthase">
    <location>
        <begin position="1"/>
        <end position="325"/>
    </location>
</feature>
<feature type="domain" description="Radical SAM core" evidence="2">
    <location>
        <begin position="77"/>
        <end position="293"/>
    </location>
</feature>
<feature type="region of interest" description="Disordered" evidence="3">
    <location>
        <begin position="1"/>
        <end position="31"/>
    </location>
</feature>
<feature type="compositionally biased region" description="Basic and acidic residues" evidence="3">
    <location>
        <begin position="17"/>
        <end position="31"/>
    </location>
</feature>
<feature type="binding site" evidence="1">
    <location>
        <position position="65"/>
    </location>
    <ligand>
        <name>[4Fe-4S] cluster</name>
        <dbReference type="ChEBI" id="CHEBI:49883"/>
        <label>1</label>
    </ligand>
</feature>
<feature type="binding site" evidence="1">
    <location>
        <position position="70"/>
    </location>
    <ligand>
        <name>[4Fe-4S] cluster</name>
        <dbReference type="ChEBI" id="CHEBI:49883"/>
        <label>1</label>
    </ligand>
</feature>
<feature type="binding site" evidence="1">
    <location>
        <position position="76"/>
    </location>
    <ligand>
        <name>[4Fe-4S] cluster</name>
        <dbReference type="ChEBI" id="CHEBI:49883"/>
        <label>1</label>
    </ligand>
</feature>
<feature type="binding site" evidence="1">
    <location>
        <position position="91"/>
    </location>
    <ligand>
        <name>[4Fe-4S] cluster</name>
        <dbReference type="ChEBI" id="CHEBI:49883"/>
        <label>2</label>
        <note>4Fe-4S-S-AdoMet</note>
    </ligand>
</feature>
<feature type="binding site" evidence="1">
    <location>
        <position position="95"/>
    </location>
    <ligand>
        <name>[4Fe-4S] cluster</name>
        <dbReference type="ChEBI" id="CHEBI:49883"/>
        <label>2</label>
        <note>4Fe-4S-S-AdoMet</note>
    </ligand>
</feature>
<feature type="binding site" evidence="1">
    <location>
        <position position="98"/>
    </location>
    <ligand>
        <name>[4Fe-4S] cluster</name>
        <dbReference type="ChEBI" id="CHEBI:49883"/>
        <label>2</label>
        <note>4Fe-4S-S-AdoMet</note>
    </ligand>
</feature>
<feature type="binding site" evidence="1">
    <location>
        <position position="304"/>
    </location>
    <ligand>
        <name>[4Fe-4S] cluster</name>
        <dbReference type="ChEBI" id="CHEBI:49883"/>
        <label>1</label>
    </ligand>
</feature>
<sequence>MANLIDNTARSAASDARAARHPEKQKRADTPVLRKPDWIRVKAPLGKTFSETQKIVKDGGLVTVCEEAGCPNIGECWEQKHATFMILGDTCTRACSFCNVKTGLPAAVDTDEPRRVAEAVAQMGLNHVVITSVDRDDLDDGGAQHFVDVIEAIRAATPSTTIEILTPDFLRKPGAAEAVIDARPDVFNHNLETVPRLYLSIRPGARYFHSLRLLERVKDRDPAQFTKSGIMVGLGESKEEVMQVMDDMRSAGIDFLTIGQYLQPTRKHAAVDRFVHPDEFKAYETIARAKGFLMVSATPLTRSSHHAGDDFAKLRAAREQMMARG</sequence>
<proteinExistence type="inferred from homology"/>
<gene>
    <name evidence="1" type="primary">lipA</name>
    <name type="ordered locus">Mmar10_1436</name>
</gene>